<accession>P19542</accession>
<name>MOMPL_CHLTH</name>
<gene>
    <name type="primary">ompA</name>
    <name type="synonym">omp1L1</name>
</gene>
<evidence type="ECO:0000250" key="1"/>
<evidence type="ECO:0000305" key="2"/>
<protein>
    <recommendedName>
        <fullName>Major outer membrane porin, serovar L1</fullName>
        <shortName>MOMP</shortName>
    </recommendedName>
</protein>
<reference key="1">
    <citation type="journal article" date="1987" name="FEMS Microbiol. Lett.">
        <title>Complete nucleotide sequence of the major outer membrane protein gene from Chlamydia trachomatis serovar L1.</title>
        <authorList>
            <person name="Pickett M.A."/>
            <person name="Ward M.E."/>
            <person name="Clarke I.N."/>
        </authorList>
    </citation>
    <scope>NUCLEOTIDE SEQUENCE [GENOMIC DNA]</scope>
</reference>
<proteinExistence type="evidence at transcript level"/>
<organism>
    <name type="scientific">Chlamydia trachomatis</name>
    <dbReference type="NCBI Taxonomy" id="813"/>
    <lineage>
        <taxon>Bacteria</taxon>
        <taxon>Pseudomonadati</taxon>
        <taxon>Chlamydiota</taxon>
        <taxon>Chlamydiia</taxon>
        <taxon>Chlamydiales</taxon>
        <taxon>Chlamydiaceae</taxon>
        <taxon>Chlamydia/Chlamydophila group</taxon>
        <taxon>Chlamydia</taxon>
    </lineage>
</organism>
<keyword id="KW-0998">Cell outer membrane</keyword>
<keyword id="KW-0133">Cell shape</keyword>
<keyword id="KW-1015">Disulfide bond</keyword>
<keyword id="KW-0406">Ion transport</keyword>
<keyword id="KW-0472">Membrane</keyword>
<keyword id="KW-0626">Porin</keyword>
<keyword id="KW-0732">Signal</keyword>
<keyword id="KW-0812">Transmembrane</keyword>
<keyword id="KW-1134">Transmembrane beta strand</keyword>
<keyword id="KW-0813">Transport</keyword>
<feature type="signal peptide">
    <location>
        <begin position="1"/>
        <end position="22"/>
    </location>
</feature>
<feature type="chain" id="PRO_0000020151" description="Major outer membrane porin, serovar L1">
    <location>
        <begin position="23"/>
        <end position="393"/>
    </location>
</feature>
<dbReference type="EMBL" id="M36533">
    <property type="protein sequence ID" value="AAA23142.1"/>
    <property type="molecule type" value="Genomic_DNA"/>
</dbReference>
<dbReference type="PIR" id="S06259">
    <property type="entry name" value="S06259"/>
</dbReference>
<dbReference type="RefSeq" id="WP_015505913.1">
    <property type="nucleotide sequence ID" value="NZ_CP142852.1"/>
</dbReference>
<dbReference type="GO" id="GO:0009279">
    <property type="term" value="C:cell outer membrane"/>
    <property type="evidence" value="ECO:0007669"/>
    <property type="project" value="UniProtKB-SubCell"/>
</dbReference>
<dbReference type="GO" id="GO:0046930">
    <property type="term" value="C:pore complex"/>
    <property type="evidence" value="ECO:0007669"/>
    <property type="project" value="UniProtKB-KW"/>
</dbReference>
<dbReference type="GO" id="GO:0015288">
    <property type="term" value="F:porin activity"/>
    <property type="evidence" value="ECO:0007669"/>
    <property type="project" value="UniProtKB-KW"/>
</dbReference>
<dbReference type="GO" id="GO:0005198">
    <property type="term" value="F:structural molecule activity"/>
    <property type="evidence" value="ECO:0007669"/>
    <property type="project" value="InterPro"/>
</dbReference>
<dbReference type="GO" id="GO:0006811">
    <property type="term" value="P:monoatomic ion transport"/>
    <property type="evidence" value="ECO:0007669"/>
    <property type="project" value="UniProtKB-KW"/>
</dbReference>
<dbReference type="GO" id="GO:0008360">
    <property type="term" value="P:regulation of cell shape"/>
    <property type="evidence" value="ECO:0007669"/>
    <property type="project" value="UniProtKB-KW"/>
</dbReference>
<dbReference type="InterPro" id="IPR000604">
    <property type="entry name" value="Major_OMP_Chlamydia"/>
</dbReference>
<dbReference type="Pfam" id="PF01308">
    <property type="entry name" value="Chlam_OMP"/>
    <property type="match status" value="1"/>
</dbReference>
<dbReference type="PRINTS" id="PR01334">
    <property type="entry name" value="CHLAMIDIAOMP"/>
</dbReference>
<comment type="function">
    <text evidence="1">In elementary bodies (EBs, the infectious stage, which is able to survive outside the host cell) provides the structural integrity of the outer envelope through disulfide cross-links with the small cysteine-rich protein and the large cysteine-rich periplasmic protein. It has been described in publications as the Sarkosyl-insoluble COMC (Chlamydia outer membrane complex), and serves as the functional equivalent of peptidoglycan (By similarity).</text>
</comment>
<comment type="function">
    <text evidence="1">Permits diffusion of specific solutes through the outer membrane.</text>
</comment>
<comment type="subunit">
    <text>Part of a disulfide cross-linked outer membrane complex (COMC) composed of the major outer membrane porin (MOMP), the small cysteine-rich protein (OmcA) and the large cysteine-rich periplasmic protein (OmcB).</text>
</comment>
<comment type="subcellular location">
    <subcellularLocation>
        <location evidence="1">Cell outer membrane</location>
        <topology evidence="1">Multi-pass membrane protein</topology>
    </subcellularLocation>
</comment>
<comment type="developmental stage">
    <text>It is present but some of the disulfide bonds are reduced in reticulate bodies (RBs).</text>
</comment>
<comment type="similarity">
    <text evidence="2">Belongs to the chlamydial porin (CP) (TC 1.B.2) family.</text>
</comment>
<sequence length="393" mass="42543">MKKLLKSVLVFAALSSASSLQALPVGNPAEPSLMIDGILWEGFGGDPCDPCTTWCDAISMRMGYYGDFVFDRVLQTDVNKEFQMGAKPTATTGNAAAPSTCTARENPAYGRHMQDAEMFTNAAYMALNIWDRFDVFCTLGATSGYLKGNSASFNLVGLFGDNENQSTVKKDAVPNMSFDQSVVELYTDTTFAWSVGARAALWECGCATLGASFQYAQSKPKVEELNVLCNAAEFTINKPKGYVGKEFPLDLTAGTDAATGTKDASIDYHEWQASLALSYRLNMFTPYIGVKWSRASFDADTIRIAQPKLATAIFDTTTLNPTIAGAGEVKANAEGQLGDTMQIVSLQLNKMKSRKSCGIAVGTTIVDADKYAVTVETRLIDERAAHVNAQFRF</sequence>